<proteinExistence type="inferred from homology"/>
<sequence>MKNISILGSTGSIGTQTLDVVRNHPEKFKIVALSASGNIDAIENQIHEFHPEIVAVFHREKAEILSARIGKKVKVVSGIEGLIEVATLDSADIVVTSVVGSIGLIPTVEAIRCGKTIALANKETLVVAGELIKKEAEKHKVQIIPVDSEHSAIFQCLQGEDIHNISRIILTASGGAFRNWEKQDIQHAKAQDALKHPTWNMGSKVTIDSASLMNKGLEVMEARWLFNVELDKIDVIVHPQSIVHSMVEYNDFSIIAQIGAPDMRGPIQYALSYPNRINSSIERLDFRKISALTFMAPDTDKFPCLSLAYESLKIGKTMPCVLNGANEVLVEYFLEDRIGFYDIPKFIEKAMSAHKPWVYTDIEELLEVDRWVRNWIKEQIE</sequence>
<keyword id="KW-0414">Isoprene biosynthesis</keyword>
<keyword id="KW-0464">Manganese</keyword>
<keyword id="KW-0479">Metal-binding</keyword>
<keyword id="KW-0521">NADP</keyword>
<keyword id="KW-0560">Oxidoreductase</keyword>
<keyword id="KW-1185">Reference proteome</keyword>
<accession>A8MHH5</accession>
<gene>
    <name evidence="1" type="primary">dxr</name>
    <name type="ordered locus">Clos_1519</name>
</gene>
<name>DXR_ALKOO</name>
<feature type="chain" id="PRO_1000058411" description="1-deoxy-D-xylulose 5-phosphate reductoisomerase">
    <location>
        <begin position="1"/>
        <end position="381"/>
    </location>
</feature>
<feature type="binding site" evidence="1">
    <location>
        <position position="10"/>
    </location>
    <ligand>
        <name>NADPH</name>
        <dbReference type="ChEBI" id="CHEBI:57783"/>
    </ligand>
</feature>
<feature type="binding site" evidence="1">
    <location>
        <position position="11"/>
    </location>
    <ligand>
        <name>NADPH</name>
        <dbReference type="ChEBI" id="CHEBI:57783"/>
    </ligand>
</feature>
<feature type="binding site" evidence="1">
    <location>
        <position position="12"/>
    </location>
    <ligand>
        <name>NADPH</name>
        <dbReference type="ChEBI" id="CHEBI:57783"/>
    </ligand>
</feature>
<feature type="binding site" evidence="1">
    <location>
        <position position="13"/>
    </location>
    <ligand>
        <name>NADPH</name>
        <dbReference type="ChEBI" id="CHEBI:57783"/>
    </ligand>
</feature>
<feature type="binding site" evidence="1">
    <location>
        <position position="38"/>
    </location>
    <ligand>
        <name>NADPH</name>
        <dbReference type="ChEBI" id="CHEBI:57783"/>
    </ligand>
</feature>
<feature type="binding site" evidence="1">
    <location>
        <position position="121"/>
    </location>
    <ligand>
        <name>NADPH</name>
        <dbReference type="ChEBI" id="CHEBI:57783"/>
    </ligand>
</feature>
<feature type="binding site" evidence="1">
    <location>
        <position position="122"/>
    </location>
    <ligand>
        <name>1-deoxy-D-xylulose 5-phosphate</name>
        <dbReference type="ChEBI" id="CHEBI:57792"/>
    </ligand>
</feature>
<feature type="binding site" evidence="1">
    <location>
        <position position="123"/>
    </location>
    <ligand>
        <name>NADPH</name>
        <dbReference type="ChEBI" id="CHEBI:57783"/>
    </ligand>
</feature>
<feature type="binding site" evidence="1">
    <location>
        <position position="147"/>
    </location>
    <ligand>
        <name>Mn(2+)</name>
        <dbReference type="ChEBI" id="CHEBI:29035"/>
    </ligand>
</feature>
<feature type="binding site" evidence="1">
    <location>
        <position position="148"/>
    </location>
    <ligand>
        <name>1-deoxy-D-xylulose 5-phosphate</name>
        <dbReference type="ChEBI" id="CHEBI:57792"/>
    </ligand>
</feature>
<feature type="binding site" evidence="1">
    <location>
        <position position="149"/>
    </location>
    <ligand>
        <name>1-deoxy-D-xylulose 5-phosphate</name>
        <dbReference type="ChEBI" id="CHEBI:57792"/>
    </ligand>
</feature>
<feature type="binding site" evidence="1">
    <location>
        <position position="149"/>
    </location>
    <ligand>
        <name>Mn(2+)</name>
        <dbReference type="ChEBI" id="CHEBI:29035"/>
    </ligand>
</feature>
<feature type="binding site" evidence="1">
    <location>
        <position position="173"/>
    </location>
    <ligand>
        <name>1-deoxy-D-xylulose 5-phosphate</name>
        <dbReference type="ChEBI" id="CHEBI:57792"/>
    </ligand>
</feature>
<feature type="binding site" evidence="1">
    <location>
        <position position="196"/>
    </location>
    <ligand>
        <name>1-deoxy-D-xylulose 5-phosphate</name>
        <dbReference type="ChEBI" id="CHEBI:57792"/>
    </ligand>
</feature>
<feature type="binding site" evidence="1">
    <location>
        <position position="202"/>
    </location>
    <ligand>
        <name>NADPH</name>
        <dbReference type="ChEBI" id="CHEBI:57783"/>
    </ligand>
</feature>
<feature type="binding site" evidence="1">
    <location>
        <position position="209"/>
    </location>
    <ligand>
        <name>1-deoxy-D-xylulose 5-phosphate</name>
        <dbReference type="ChEBI" id="CHEBI:57792"/>
    </ligand>
</feature>
<feature type="binding site" evidence="1">
    <location>
        <position position="214"/>
    </location>
    <ligand>
        <name>1-deoxy-D-xylulose 5-phosphate</name>
        <dbReference type="ChEBI" id="CHEBI:57792"/>
    </ligand>
</feature>
<feature type="binding site" evidence="1">
    <location>
        <position position="215"/>
    </location>
    <ligand>
        <name>1-deoxy-D-xylulose 5-phosphate</name>
        <dbReference type="ChEBI" id="CHEBI:57792"/>
    </ligand>
</feature>
<feature type="binding site" evidence="1">
    <location>
        <position position="218"/>
    </location>
    <ligand>
        <name>1-deoxy-D-xylulose 5-phosphate</name>
        <dbReference type="ChEBI" id="CHEBI:57792"/>
    </ligand>
</feature>
<feature type="binding site" evidence="1">
    <location>
        <position position="218"/>
    </location>
    <ligand>
        <name>Mn(2+)</name>
        <dbReference type="ChEBI" id="CHEBI:29035"/>
    </ligand>
</feature>
<reference key="1">
    <citation type="submission" date="2007-10" db="EMBL/GenBank/DDBJ databases">
        <title>Complete genome of Alkaliphilus oremlandii OhILAs.</title>
        <authorList>
            <person name="Copeland A."/>
            <person name="Lucas S."/>
            <person name="Lapidus A."/>
            <person name="Barry K."/>
            <person name="Detter J.C."/>
            <person name="Glavina del Rio T."/>
            <person name="Hammon N."/>
            <person name="Israni S."/>
            <person name="Dalin E."/>
            <person name="Tice H."/>
            <person name="Pitluck S."/>
            <person name="Chain P."/>
            <person name="Malfatti S."/>
            <person name="Shin M."/>
            <person name="Vergez L."/>
            <person name="Schmutz J."/>
            <person name="Larimer F."/>
            <person name="Land M."/>
            <person name="Hauser L."/>
            <person name="Kyrpides N."/>
            <person name="Mikhailova N."/>
            <person name="Stolz J.F."/>
            <person name="Dawson A."/>
            <person name="Fisher E."/>
            <person name="Crable B."/>
            <person name="Perera E."/>
            <person name="Lisak J."/>
            <person name="Ranganathan M."/>
            <person name="Basu P."/>
            <person name="Richardson P."/>
        </authorList>
    </citation>
    <scope>NUCLEOTIDE SEQUENCE [LARGE SCALE GENOMIC DNA]</scope>
    <source>
        <strain>OhILAs</strain>
    </source>
</reference>
<evidence type="ECO:0000255" key="1">
    <source>
        <dbReference type="HAMAP-Rule" id="MF_00183"/>
    </source>
</evidence>
<comment type="function">
    <text evidence="1">Catalyzes the NADPH-dependent rearrangement and reduction of 1-deoxy-D-xylulose-5-phosphate (DXP) to 2-C-methyl-D-erythritol 4-phosphate (MEP).</text>
</comment>
<comment type="catalytic activity">
    <reaction evidence="1">
        <text>2-C-methyl-D-erythritol 4-phosphate + NADP(+) = 1-deoxy-D-xylulose 5-phosphate + NADPH + H(+)</text>
        <dbReference type="Rhea" id="RHEA:13717"/>
        <dbReference type="ChEBI" id="CHEBI:15378"/>
        <dbReference type="ChEBI" id="CHEBI:57783"/>
        <dbReference type="ChEBI" id="CHEBI:57792"/>
        <dbReference type="ChEBI" id="CHEBI:58262"/>
        <dbReference type="ChEBI" id="CHEBI:58349"/>
        <dbReference type="EC" id="1.1.1.267"/>
    </reaction>
    <physiologicalReaction direction="right-to-left" evidence="1">
        <dbReference type="Rhea" id="RHEA:13719"/>
    </physiologicalReaction>
</comment>
<comment type="cofactor">
    <cofactor evidence="1">
        <name>Mg(2+)</name>
        <dbReference type="ChEBI" id="CHEBI:18420"/>
    </cofactor>
    <cofactor evidence="1">
        <name>Mn(2+)</name>
        <dbReference type="ChEBI" id="CHEBI:29035"/>
    </cofactor>
</comment>
<comment type="pathway">
    <text evidence="1">Isoprenoid biosynthesis; isopentenyl diphosphate biosynthesis via DXP pathway; isopentenyl diphosphate from 1-deoxy-D-xylulose 5-phosphate: step 1/6.</text>
</comment>
<comment type="similarity">
    <text evidence="1">Belongs to the DXR family.</text>
</comment>
<dbReference type="EC" id="1.1.1.267" evidence="1"/>
<dbReference type="EMBL" id="CP000853">
    <property type="protein sequence ID" value="ABW19062.1"/>
    <property type="molecule type" value="Genomic_DNA"/>
</dbReference>
<dbReference type="RefSeq" id="WP_012159374.1">
    <property type="nucleotide sequence ID" value="NC_009922.1"/>
</dbReference>
<dbReference type="SMR" id="A8MHH5"/>
<dbReference type="STRING" id="350688.Clos_1519"/>
<dbReference type="KEGG" id="aoe:Clos_1519"/>
<dbReference type="eggNOG" id="COG0743">
    <property type="taxonomic scope" value="Bacteria"/>
</dbReference>
<dbReference type="HOGENOM" id="CLU_035714_4_0_9"/>
<dbReference type="OrthoDB" id="9806546at2"/>
<dbReference type="UniPathway" id="UPA00056">
    <property type="reaction ID" value="UER00092"/>
</dbReference>
<dbReference type="Proteomes" id="UP000000269">
    <property type="component" value="Chromosome"/>
</dbReference>
<dbReference type="GO" id="GO:0030604">
    <property type="term" value="F:1-deoxy-D-xylulose-5-phosphate reductoisomerase activity"/>
    <property type="evidence" value="ECO:0007669"/>
    <property type="project" value="UniProtKB-UniRule"/>
</dbReference>
<dbReference type="GO" id="GO:0030145">
    <property type="term" value="F:manganese ion binding"/>
    <property type="evidence" value="ECO:0007669"/>
    <property type="project" value="TreeGrafter"/>
</dbReference>
<dbReference type="GO" id="GO:0070402">
    <property type="term" value="F:NADPH binding"/>
    <property type="evidence" value="ECO:0007669"/>
    <property type="project" value="InterPro"/>
</dbReference>
<dbReference type="GO" id="GO:0051484">
    <property type="term" value="P:isopentenyl diphosphate biosynthetic process, methylerythritol 4-phosphate pathway involved in terpenoid biosynthetic process"/>
    <property type="evidence" value="ECO:0007669"/>
    <property type="project" value="TreeGrafter"/>
</dbReference>
<dbReference type="FunFam" id="3.40.50.720:FF:000045">
    <property type="entry name" value="1-deoxy-D-xylulose 5-phosphate reductoisomerase"/>
    <property type="match status" value="1"/>
</dbReference>
<dbReference type="Gene3D" id="1.10.1740.10">
    <property type="match status" value="1"/>
</dbReference>
<dbReference type="Gene3D" id="3.40.50.720">
    <property type="entry name" value="NAD(P)-binding Rossmann-like Domain"/>
    <property type="match status" value="1"/>
</dbReference>
<dbReference type="HAMAP" id="MF_00183">
    <property type="entry name" value="DXP_reductoisom"/>
    <property type="match status" value="1"/>
</dbReference>
<dbReference type="InterPro" id="IPR003821">
    <property type="entry name" value="DXP_reductoisomerase"/>
</dbReference>
<dbReference type="InterPro" id="IPR013644">
    <property type="entry name" value="DXP_reductoisomerase_C"/>
</dbReference>
<dbReference type="InterPro" id="IPR013512">
    <property type="entry name" value="DXP_reductoisomerase_N"/>
</dbReference>
<dbReference type="InterPro" id="IPR026877">
    <property type="entry name" value="DXPR_C"/>
</dbReference>
<dbReference type="InterPro" id="IPR036169">
    <property type="entry name" value="DXPR_C_sf"/>
</dbReference>
<dbReference type="InterPro" id="IPR036291">
    <property type="entry name" value="NAD(P)-bd_dom_sf"/>
</dbReference>
<dbReference type="NCBIfam" id="TIGR00243">
    <property type="entry name" value="Dxr"/>
    <property type="match status" value="1"/>
</dbReference>
<dbReference type="NCBIfam" id="NF009114">
    <property type="entry name" value="PRK12464.1"/>
    <property type="match status" value="1"/>
</dbReference>
<dbReference type="PANTHER" id="PTHR30525">
    <property type="entry name" value="1-DEOXY-D-XYLULOSE 5-PHOSPHATE REDUCTOISOMERASE"/>
    <property type="match status" value="1"/>
</dbReference>
<dbReference type="PANTHER" id="PTHR30525:SF0">
    <property type="entry name" value="1-DEOXY-D-XYLULOSE 5-PHOSPHATE REDUCTOISOMERASE, CHLOROPLASTIC"/>
    <property type="match status" value="1"/>
</dbReference>
<dbReference type="Pfam" id="PF08436">
    <property type="entry name" value="DXP_redisom_C"/>
    <property type="match status" value="1"/>
</dbReference>
<dbReference type="Pfam" id="PF02670">
    <property type="entry name" value="DXP_reductoisom"/>
    <property type="match status" value="1"/>
</dbReference>
<dbReference type="Pfam" id="PF13288">
    <property type="entry name" value="DXPR_C"/>
    <property type="match status" value="1"/>
</dbReference>
<dbReference type="PIRSF" id="PIRSF006205">
    <property type="entry name" value="Dxp_reductismrs"/>
    <property type="match status" value="1"/>
</dbReference>
<dbReference type="SUPFAM" id="SSF69055">
    <property type="entry name" value="1-deoxy-D-xylulose-5-phosphate reductoisomerase, C-terminal domain"/>
    <property type="match status" value="1"/>
</dbReference>
<dbReference type="SUPFAM" id="SSF55347">
    <property type="entry name" value="Glyceraldehyde-3-phosphate dehydrogenase-like, C-terminal domain"/>
    <property type="match status" value="1"/>
</dbReference>
<dbReference type="SUPFAM" id="SSF51735">
    <property type="entry name" value="NAD(P)-binding Rossmann-fold domains"/>
    <property type="match status" value="1"/>
</dbReference>
<organism>
    <name type="scientific">Alkaliphilus oremlandii (strain OhILAs)</name>
    <name type="common">Clostridium oremlandii (strain OhILAs)</name>
    <dbReference type="NCBI Taxonomy" id="350688"/>
    <lineage>
        <taxon>Bacteria</taxon>
        <taxon>Bacillati</taxon>
        <taxon>Bacillota</taxon>
        <taxon>Clostridia</taxon>
        <taxon>Peptostreptococcales</taxon>
        <taxon>Natronincolaceae</taxon>
        <taxon>Alkaliphilus</taxon>
    </lineage>
</organism>
<protein>
    <recommendedName>
        <fullName evidence="1">1-deoxy-D-xylulose 5-phosphate reductoisomerase</fullName>
        <shortName evidence="1">DXP reductoisomerase</shortName>
        <ecNumber evidence="1">1.1.1.267</ecNumber>
    </recommendedName>
    <alternativeName>
        <fullName evidence="1">1-deoxyxylulose-5-phosphate reductoisomerase</fullName>
    </alternativeName>
    <alternativeName>
        <fullName evidence="1">2-C-methyl-D-erythritol 4-phosphate synthase</fullName>
    </alternativeName>
</protein>